<organism>
    <name type="scientific">Drosophila miranda</name>
    <name type="common">Fruit fly</name>
    <dbReference type="NCBI Taxonomy" id="7229"/>
    <lineage>
        <taxon>Eukaryota</taxon>
        <taxon>Metazoa</taxon>
        <taxon>Ecdysozoa</taxon>
        <taxon>Arthropoda</taxon>
        <taxon>Hexapoda</taxon>
        <taxon>Insecta</taxon>
        <taxon>Pterygota</taxon>
        <taxon>Neoptera</taxon>
        <taxon>Endopterygota</taxon>
        <taxon>Diptera</taxon>
        <taxon>Brachycera</taxon>
        <taxon>Muscomorpha</taxon>
        <taxon>Ephydroidea</taxon>
        <taxon>Drosophilidae</taxon>
        <taxon>Drosophila</taxon>
        <taxon>Sophophora</taxon>
    </lineage>
</organism>
<name>NU1M_DROMI</name>
<keyword id="KW-0249">Electron transport</keyword>
<keyword id="KW-0472">Membrane</keyword>
<keyword id="KW-0496">Mitochondrion</keyword>
<keyword id="KW-0999">Mitochondrion inner membrane</keyword>
<keyword id="KW-0520">NAD</keyword>
<keyword id="KW-0679">Respiratory chain</keyword>
<keyword id="KW-1278">Translocase</keyword>
<keyword id="KW-0812">Transmembrane</keyword>
<keyword id="KW-1133">Transmembrane helix</keyword>
<keyword id="KW-0813">Transport</keyword>
<keyword id="KW-0830">Ubiquinone</keyword>
<geneLocation type="mitochondrion"/>
<evidence type="ECO:0000250" key="1"/>
<evidence type="ECO:0000255" key="2"/>
<evidence type="ECO:0000305" key="3"/>
<reference key="1">
    <citation type="journal article" date="1994" name="J. Mol. Evol.">
        <title>Phylogeny of the Drosophila obscura species group deduced from mitochondrial DNA sequences.</title>
        <authorList>
            <person name="Barrio E."/>
            <person name="Latorre A."/>
            <person name="Moya A."/>
        </authorList>
    </citation>
    <scope>NUCLEOTIDE SEQUENCE [GENOMIC DNA]</scope>
</reference>
<proteinExistence type="inferred from homology"/>
<gene>
    <name type="primary">mt:ND1</name>
    <name type="synonym">ND1</name>
</gene>
<protein>
    <recommendedName>
        <fullName>NADH-ubiquinone oxidoreductase chain 1</fullName>
        <ecNumber>7.1.1.2</ecNumber>
    </recommendedName>
    <alternativeName>
        <fullName>NADH dehydrogenase subunit 1</fullName>
    </alternativeName>
</protein>
<feature type="chain" id="PRO_0000117393" description="NADH-ubiquinone oxidoreductase chain 1">
    <location>
        <begin position="1"/>
        <end position="163"/>
    </location>
</feature>
<feature type="transmembrane region" description="Helical" evidence="2">
    <location>
        <begin position="3"/>
        <end position="23"/>
    </location>
</feature>
<feature type="transmembrane region" description="Helical" evidence="2">
    <location>
        <begin position="77"/>
        <end position="97"/>
    </location>
</feature>
<feature type="transmembrane region" description="Helical" evidence="2">
    <location>
        <begin position="104"/>
        <end position="124"/>
    </location>
</feature>
<feature type="transmembrane region" description="Helical" evidence="2">
    <location>
        <begin position="143"/>
        <end position="163"/>
    </location>
</feature>
<feature type="non-consecutive residues" evidence="3">
    <location>
        <begin position="152"/>
        <end position="153"/>
    </location>
</feature>
<accession>P84305</accession>
<accession>P51933</accession>
<accession>P51935</accession>
<accession>P51936</accession>
<accession>Q34339</accession>
<accession>Q34366</accession>
<accession>Q34370</accession>
<dbReference type="EC" id="7.1.1.2"/>
<dbReference type="EMBL" id="U07317">
    <property type="protein sequence ID" value="AAA76650.1"/>
    <property type="molecule type" value="Genomic_DNA"/>
</dbReference>
<dbReference type="EMBL" id="U07318">
    <property type="protein sequence ID" value="AAA76651.1"/>
    <property type="molecule type" value="Genomic_DNA"/>
</dbReference>
<dbReference type="SMR" id="P84305"/>
<dbReference type="GO" id="GO:0005743">
    <property type="term" value="C:mitochondrial inner membrane"/>
    <property type="evidence" value="ECO:0007669"/>
    <property type="project" value="UniProtKB-SubCell"/>
</dbReference>
<dbReference type="GO" id="GO:0008137">
    <property type="term" value="F:NADH dehydrogenase (ubiquinone) activity"/>
    <property type="evidence" value="ECO:0007669"/>
    <property type="project" value="UniProtKB-EC"/>
</dbReference>
<dbReference type="GO" id="GO:0009060">
    <property type="term" value="P:aerobic respiration"/>
    <property type="evidence" value="ECO:0007669"/>
    <property type="project" value="TreeGrafter"/>
</dbReference>
<dbReference type="InterPro" id="IPR001694">
    <property type="entry name" value="NADH_UbQ_OxRdtase_su1/FPO"/>
</dbReference>
<dbReference type="InterPro" id="IPR018086">
    <property type="entry name" value="NADH_UbQ_OxRdtase_su1_CS"/>
</dbReference>
<dbReference type="PANTHER" id="PTHR11432">
    <property type="entry name" value="NADH DEHYDROGENASE SUBUNIT 1"/>
    <property type="match status" value="1"/>
</dbReference>
<dbReference type="PANTHER" id="PTHR11432:SF3">
    <property type="entry name" value="NADH-UBIQUINONE OXIDOREDUCTASE CHAIN 1"/>
    <property type="match status" value="1"/>
</dbReference>
<dbReference type="Pfam" id="PF00146">
    <property type="entry name" value="NADHdh"/>
    <property type="match status" value="1"/>
</dbReference>
<dbReference type="PROSITE" id="PS00667">
    <property type="entry name" value="COMPLEX1_ND1_1"/>
    <property type="match status" value="1"/>
</dbReference>
<comment type="function">
    <text evidence="1">Core subunit of the mitochondrial membrane respiratory chain NADH dehydrogenase (Complex I) that is believed to belong to the minimal assembly required for catalysis. Complex I functions in the transfer of electrons from NADH to the respiratory chain. The immediate electron acceptor for the enzyme is believed to be ubiquinone (By similarity).</text>
</comment>
<comment type="catalytic activity">
    <reaction>
        <text>a ubiquinone + NADH + 5 H(+)(in) = a ubiquinol + NAD(+) + 4 H(+)(out)</text>
        <dbReference type="Rhea" id="RHEA:29091"/>
        <dbReference type="Rhea" id="RHEA-COMP:9565"/>
        <dbReference type="Rhea" id="RHEA-COMP:9566"/>
        <dbReference type="ChEBI" id="CHEBI:15378"/>
        <dbReference type="ChEBI" id="CHEBI:16389"/>
        <dbReference type="ChEBI" id="CHEBI:17976"/>
        <dbReference type="ChEBI" id="CHEBI:57540"/>
        <dbReference type="ChEBI" id="CHEBI:57945"/>
        <dbReference type="EC" id="7.1.1.2"/>
    </reaction>
</comment>
<comment type="subcellular location">
    <subcellularLocation>
        <location evidence="1">Mitochondrion inner membrane</location>
        <topology evidence="1">Multi-pass membrane protein</topology>
    </subcellularLocation>
</comment>
<comment type="similarity">
    <text evidence="3">Belongs to the complex I subunit 1 family.</text>
</comment>
<sequence length="163" mass="18232">MEFILSLIGSLLLIICVLVSVAFLTLLERKVLGYIQIRKGPNKVGLMGIPQPFCDAIKLFTKEQTYPLLSNYLSYYISPIFSLFLSLFVWMCMPFFVKLYSFNLGGLFFLCCTSLGVYTVMIAGWSSNSNYALLGGLRAVAQTISYEVSLALIGFKILLFSLL</sequence>